<feature type="chain" id="PRO_0000223552" description="Ribosomal RNA small subunit methyltransferase H">
    <location>
        <begin position="1"/>
        <end position="314"/>
    </location>
</feature>
<feature type="binding site" evidence="1">
    <location>
        <begin position="36"/>
        <end position="38"/>
    </location>
    <ligand>
        <name>S-adenosyl-L-methionine</name>
        <dbReference type="ChEBI" id="CHEBI:59789"/>
    </ligand>
</feature>
<feature type="binding site" evidence="1">
    <location>
        <position position="56"/>
    </location>
    <ligand>
        <name>S-adenosyl-L-methionine</name>
        <dbReference type="ChEBI" id="CHEBI:59789"/>
    </ligand>
</feature>
<feature type="binding site" evidence="1">
    <location>
        <position position="83"/>
    </location>
    <ligand>
        <name>S-adenosyl-L-methionine</name>
        <dbReference type="ChEBI" id="CHEBI:59789"/>
    </ligand>
</feature>
<feature type="binding site" evidence="1">
    <location>
        <position position="104"/>
    </location>
    <ligand>
        <name>S-adenosyl-L-methionine</name>
        <dbReference type="ChEBI" id="CHEBI:59789"/>
    </ligand>
</feature>
<feature type="binding site" evidence="1">
    <location>
        <position position="111"/>
    </location>
    <ligand>
        <name>S-adenosyl-L-methionine</name>
        <dbReference type="ChEBI" id="CHEBI:59789"/>
    </ligand>
</feature>
<evidence type="ECO:0000255" key="1">
    <source>
        <dbReference type="HAMAP-Rule" id="MF_01007"/>
    </source>
</evidence>
<reference key="1">
    <citation type="submission" date="2005-10" db="EMBL/GenBank/DDBJ databases">
        <title>Complete sequence of Pelobacter carbinolicus DSM 2380.</title>
        <authorList>
            <person name="Copeland A."/>
            <person name="Lucas S."/>
            <person name="Lapidus A."/>
            <person name="Barry K."/>
            <person name="Detter J.C."/>
            <person name="Glavina T."/>
            <person name="Hammon N."/>
            <person name="Israni S."/>
            <person name="Pitluck S."/>
            <person name="Chertkov O."/>
            <person name="Schmutz J."/>
            <person name="Larimer F."/>
            <person name="Land M."/>
            <person name="Kyrpides N."/>
            <person name="Ivanova N."/>
            <person name="Richardson P."/>
        </authorList>
    </citation>
    <scope>NUCLEOTIDE SEQUENCE [LARGE SCALE GENOMIC DNA]</scope>
    <source>
        <strain>DSM 2380 / NBRC 103641 / GraBd1</strain>
    </source>
</reference>
<name>RSMH_SYNC1</name>
<gene>
    <name evidence="1" type="primary">rsmH</name>
    <name type="synonym">mraW</name>
    <name type="ordered locus">Pcar_2210</name>
</gene>
<protein>
    <recommendedName>
        <fullName evidence="1">Ribosomal RNA small subunit methyltransferase H</fullName>
        <ecNumber evidence="1">2.1.1.199</ecNumber>
    </recommendedName>
    <alternativeName>
        <fullName evidence="1">16S rRNA m(4)C1402 methyltransferase</fullName>
    </alternativeName>
    <alternativeName>
        <fullName evidence="1">rRNA (cytosine-N(4)-)-methyltransferase RsmH</fullName>
    </alternativeName>
</protein>
<sequence>MTREVFQHSSVMPEEVLECLRPQPGEVFVDGTVGGGGHARLILEATAPDGLLVGLDRDREALEEAGRQLASFGERVLLRHGNFADATRILAELDIATVDGILLDLGVSSFQLDTARRGFSFQSDAPLDMRMDTSAGMTAADVVNALSPEELARIFREYGEERYARRIARRIEKVRADEPLMTTRQLAELVRDAVPGGHVPSRIHPATRVFQALRIHVNAELDSLREGLRRSLALLKPGGRMAVISFHSLEDRIVKQFFRSEVQTCICPPGLPICACNRKPGVALLTRKGLKASESEIAANPRARSAVLRAIRRL</sequence>
<dbReference type="EC" id="2.1.1.199" evidence="1"/>
<dbReference type="EMBL" id="CP000142">
    <property type="protein sequence ID" value="ABA89449.1"/>
    <property type="molecule type" value="Genomic_DNA"/>
</dbReference>
<dbReference type="RefSeq" id="WP_011341964.1">
    <property type="nucleotide sequence ID" value="NC_007498.2"/>
</dbReference>
<dbReference type="SMR" id="Q3A2F8"/>
<dbReference type="STRING" id="338963.Pcar_2210"/>
<dbReference type="KEGG" id="pca:Pcar_2210"/>
<dbReference type="eggNOG" id="COG0275">
    <property type="taxonomic scope" value="Bacteria"/>
</dbReference>
<dbReference type="HOGENOM" id="CLU_038422_2_0_7"/>
<dbReference type="OrthoDB" id="9806637at2"/>
<dbReference type="Proteomes" id="UP000002534">
    <property type="component" value="Chromosome"/>
</dbReference>
<dbReference type="GO" id="GO:0005737">
    <property type="term" value="C:cytoplasm"/>
    <property type="evidence" value="ECO:0007669"/>
    <property type="project" value="UniProtKB-SubCell"/>
</dbReference>
<dbReference type="GO" id="GO:0071424">
    <property type="term" value="F:rRNA (cytosine-N4-)-methyltransferase activity"/>
    <property type="evidence" value="ECO:0007669"/>
    <property type="project" value="UniProtKB-UniRule"/>
</dbReference>
<dbReference type="GO" id="GO:0070475">
    <property type="term" value="P:rRNA base methylation"/>
    <property type="evidence" value="ECO:0007669"/>
    <property type="project" value="UniProtKB-UniRule"/>
</dbReference>
<dbReference type="FunFam" id="1.10.150.170:FF:000001">
    <property type="entry name" value="Ribosomal RNA small subunit methyltransferase H"/>
    <property type="match status" value="1"/>
</dbReference>
<dbReference type="Gene3D" id="1.10.150.170">
    <property type="entry name" value="Putative methyltransferase TM0872, insert domain"/>
    <property type="match status" value="1"/>
</dbReference>
<dbReference type="Gene3D" id="3.40.50.150">
    <property type="entry name" value="Vaccinia Virus protein VP39"/>
    <property type="match status" value="1"/>
</dbReference>
<dbReference type="HAMAP" id="MF_01007">
    <property type="entry name" value="16SrRNA_methyltr_H"/>
    <property type="match status" value="1"/>
</dbReference>
<dbReference type="InterPro" id="IPR002903">
    <property type="entry name" value="RsmH"/>
</dbReference>
<dbReference type="InterPro" id="IPR023397">
    <property type="entry name" value="SAM-dep_MeTrfase_MraW_recog"/>
</dbReference>
<dbReference type="InterPro" id="IPR029063">
    <property type="entry name" value="SAM-dependent_MTases_sf"/>
</dbReference>
<dbReference type="NCBIfam" id="TIGR00006">
    <property type="entry name" value="16S rRNA (cytosine(1402)-N(4))-methyltransferase RsmH"/>
    <property type="match status" value="1"/>
</dbReference>
<dbReference type="PANTHER" id="PTHR11265:SF0">
    <property type="entry name" value="12S RRNA N4-METHYLCYTIDINE METHYLTRANSFERASE"/>
    <property type="match status" value="1"/>
</dbReference>
<dbReference type="PANTHER" id="PTHR11265">
    <property type="entry name" value="S-ADENOSYL-METHYLTRANSFERASE MRAW"/>
    <property type="match status" value="1"/>
</dbReference>
<dbReference type="Pfam" id="PF01795">
    <property type="entry name" value="Methyltransf_5"/>
    <property type="match status" value="1"/>
</dbReference>
<dbReference type="PIRSF" id="PIRSF004486">
    <property type="entry name" value="MraW"/>
    <property type="match status" value="1"/>
</dbReference>
<dbReference type="SUPFAM" id="SSF81799">
    <property type="entry name" value="Putative methyltransferase TM0872, insert domain"/>
    <property type="match status" value="1"/>
</dbReference>
<dbReference type="SUPFAM" id="SSF53335">
    <property type="entry name" value="S-adenosyl-L-methionine-dependent methyltransferases"/>
    <property type="match status" value="1"/>
</dbReference>
<accession>Q3A2F8</accession>
<proteinExistence type="inferred from homology"/>
<organism>
    <name type="scientific">Syntrophotalea carbinolica (strain DSM 2380 / NBRC 103641 / GraBd1)</name>
    <name type="common">Pelobacter carbinolicus</name>
    <dbReference type="NCBI Taxonomy" id="338963"/>
    <lineage>
        <taxon>Bacteria</taxon>
        <taxon>Pseudomonadati</taxon>
        <taxon>Thermodesulfobacteriota</taxon>
        <taxon>Desulfuromonadia</taxon>
        <taxon>Desulfuromonadales</taxon>
        <taxon>Syntrophotaleaceae</taxon>
        <taxon>Syntrophotalea</taxon>
    </lineage>
</organism>
<keyword id="KW-0963">Cytoplasm</keyword>
<keyword id="KW-0489">Methyltransferase</keyword>
<keyword id="KW-1185">Reference proteome</keyword>
<keyword id="KW-0698">rRNA processing</keyword>
<keyword id="KW-0949">S-adenosyl-L-methionine</keyword>
<keyword id="KW-0808">Transferase</keyword>
<comment type="function">
    <text evidence="1">Specifically methylates the N4 position of cytidine in position 1402 (C1402) of 16S rRNA.</text>
</comment>
<comment type="catalytic activity">
    <reaction evidence="1">
        <text>cytidine(1402) in 16S rRNA + S-adenosyl-L-methionine = N(4)-methylcytidine(1402) in 16S rRNA + S-adenosyl-L-homocysteine + H(+)</text>
        <dbReference type="Rhea" id="RHEA:42928"/>
        <dbReference type="Rhea" id="RHEA-COMP:10286"/>
        <dbReference type="Rhea" id="RHEA-COMP:10287"/>
        <dbReference type="ChEBI" id="CHEBI:15378"/>
        <dbReference type="ChEBI" id="CHEBI:57856"/>
        <dbReference type="ChEBI" id="CHEBI:59789"/>
        <dbReference type="ChEBI" id="CHEBI:74506"/>
        <dbReference type="ChEBI" id="CHEBI:82748"/>
        <dbReference type="EC" id="2.1.1.199"/>
    </reaction>
</comment>
<comment type="subcellular location">
    <subcellularLocation>
        <location evidence="1">Cytoplasm</location>
    </subcellularLocation>
</comment>
<comment type="similarity">
    <text evidence="1">Belongs to the methyltransferase superfamily. RsmH family.</text>
</comment>